<accession>A9LZ77</accession>
<proteinExistence type="inferred from homology"/>
<gene>
    <name evidence="1" type="primary">cysG</name>
    <name type="ordered locus">NMCC_1074</name>
</gene>
<sequence>MNYFPIFANLAGRPVLVVGGGSVAARKISLLLDAGAQVRVVANQLNAELSALAAENKILWLAEEFRAEHIRTVFLIIAASSDQALNRRVFQLAESCQKPVNVVDDRDYCSFIFPSIINRNPIQIAVSSSGSAPVLARLLREKLEALLPHSLGDMAEISGRWRDAVKAKLKSVTERRRFWEKQFNGRFAALVKNQQTAQAEQELAKQLEQNYQGGFVSLVGAGPGDAGLLTLKGLQEIQQADVVLYDALVSDGILSLVRRDAERIFVGKRARGDRTPQEDTNALMVRLAREGRRVVRLKGGDPFVFGRGGEELETLARHQIPFSVVPGITAAVGATAYAGIPLTHRDYAQSAVFVTGHRKADAPDIEWQTLARSRQTLVIYMGALKAALIAERLQQHGRSPDTPAAVISQGTLPAQKTATGTLANLAELAETAPNPALIVIGEVVGLHEKLAWFGENGEGENRVGQAYPALGGLNAGQRAA</sequence>
<name>CYSG_NEIM0</name>
<dbReference type="EC" id="2.1.1.107" evidence="1"/>
<dbReference type="EC" id="1.3.1.76" evidence="1"/>
<dbReference type="EC" id="4.99.1.4" evidence="1"/>
<dbReference type="EMBL" id="CP000381">
    <property type="protein sequence ID" value="ABX73254.1"/>
    <property type="molecule type" value="Genomic_DNA"/>
</dbReference>
<dbReference type="RefSeq" id="WP_012221646.1">
    <property type="nucleotide sequence ID" value="NC_010120.1"/>
</dbReference>
<dbReference type="SMR" id="A9LZ77"/>
<dbReference type="KEGG" id="nmn:NMCC_1074"/>
<dbReference type="HOGENOM" id="CLU_011276_2_0_4"/>
<dbReference type="UniPathway" id="UPA00148">
    <property type="reaction ID" value="UER00211"/>
</dbReference>
<dbReference type="UniPathway" id="UPA00148">
    <property type="reaction ID" value="UER00222"/>
</dbReference>
<dbReference type="UniPathway" id="UPA00262">
    <property type="reaction ID" value="UER00211"/>
</dbReference>
<dbReference type="UniPathway" id="UPA00262">
    <property type="reaction ID" value="UER00222"/>
</dbReference>
<dbReference type="UniPathway" id="UPA00262">
    <property type="reaction ID" value="UER00376"/>
</dbReference>
<dbReference type="Proteomes" id="UP000001177">
    <property type="component" value="Chromosome"/>
</dbReference>
<dbReference type="GO" id="GO:0051287">
    <property type="term" value="F:NAD binding"/>
    <property type="evidence" value="ECO:0007669"/>
    <property type="project" value="InterPro"/>
</dbReference>
<dbReference type="GO" id="GO:0043115">
    <property type="term" value="F:precorrin-2 dehydrogenase activity"/>
    <property type="evidence" value="ECO:0007669"/>
    <property type="project" value="UniProtKB-UniRule"/>
</dbReference>
<dbReference type="GO" id="GO:0051266">
    <property type="term" value="F:sirohydrochlorin ferrochelatase activity"/>
    <property type="evidence" value="ECO:0007669"/>
    <property type="project" value="UniProtKB-EC"/>
</dbReference>
<dbReference type="GO" id="GO:0004851">
    <property type="term" value="F:uroporphyrin-III C-methyltransferase activity"/>
    <property type="evidence" value="ECO:0007669"/>
    <property type="project" value="UniProtKB-UniRule"/>
</dbReference>
<dbReference type="GO" id="GO:0009236">
    <property type="term" value="P:cobalamin biosynthetic process"/>
    <property type="evidence" value="ECO:0007669"/>
    <property type="project" value="UniProtKB-UniRule"/>
</dbReference>
<dbReference type="GO" id="GO:0032259">
    <property type="term" value="P:methylation"/>
    <property type="evidence" value="ECO:0007669"/>
    <property type="project" value="UniProtKB-KW"/>
</dbReference>
<dbReference type="GO" id="GO:0019354">
    <property type="term" value="P:siroheme biosynthetic process"/>
    <property type="evidence" value="ECO:0007669"/>
    <property type="project" value="UniProtKB-UniRule"/>
</dbReference>
<dbReference type="CDD" id="cd11642">
    <property type="entry name" value="SUMT"/>
    <property type="match status" value="1"/>
</dbReference>
<dbReference type="FunFam" id="3.30.160.110:FF:000001">
    <property type="entry name" value="Siroheme synthase"/>
    <property type="match status" value="1"/>
</dbReference>
<dbReference type="FunFam" id="3.30.950.10:FF:000001">
    <property type="entry name" value="Siroheme synthase"/>
    <property type="match status" value="1"/>
</dbReference>
<dbReference type="FunFam" id="3.40.1010.10:FF:000001">
    <property type="entry name" value="Siroheme synthase"/>
    <property type="match status" value="1"/>
</dbReference>
<dbReference type="Gene3D" id="3.40.1010.10">
    <property type="entry name" value="Cobalt-precorrin-4 Transmethylase, Domain 1"/>
    <property type="match status" value="1"/>
</dbReference>
<dbReference type="Gene3D" id="3.30.950.10">
    <property type="entry name" value="Methyltransferase, Cobalt-precorrin-4 Transmethylase, Domain 2"/>
    <property type="match status" value="1"/>
</dbReference>
<dbReference type="Gene3D" id="3.40.50.720">
    <property type="entry name" value="NAD(P)-binding Rossmann-like Domain"/>
    <property type="match status" value="1"/>
</dbReference>
<dbReference type="Gene3D" id="1.10.8.210">
    <property type="entry name" value="Sirohaem synthase, dimerisation domain"/>
    <property type="match status" value="1"/>
</dbReference>
<dbReference type="Gene3D" id="3.30.160.110">
    <property type="entry name" value="Siroheme synthase, domain 2"/>
    <property type="match status" value="1"/>
</dbReference>
<dbReference type="HAMAP" id="MF_01646">
    <property type="entry name" value="Siroheme_synth"/>
    <property type="match status" value="1"/>
</dbReference>
<dbReference type="InterPro" id="IPR000878">
    <property type="entry name" value="4pyrrol_Mease"/>
</dbReference>
<dbReference type="InterPro" id="IPR035996">
    <property type="entry name" value="4pyrrol_Methylase_sf"/>
</dbReference>
<dbReference type="InterPro" id="IPR014777">
    <property type="entry name" value="4pyrrole_Mease_sub1"/>
</dbReference>
<dbReference type="InterPro" id="IPR014776">
    <property type="entry name" value="4pyrrole_Mease_sub2"/>
</dbReference>
<dbReference type="InterPro" id="IPR006366">
    <property type="entry name" value="CobA/CysG_C"/>
</dbReference>
<dbReference type="InterPro" id="IPR036291">
    <property type="entry name" value="NAD(P)-bd_dom_sf"/>
</dbReference>
<dbReference type="InterPro" id="IPR050161">
    <property type="entry name" value="Siro_Cobalamin_biosynth"/>
</dbReference>
<dbReference type="InterPro" id="IPR037115">
    <property type="entry name" value="Sirohaem_synt_dimer_dom_sf"/>
</dbReference>
<dbReference type="InterPro" id="IPR012409">
    <property type="entry name" value="Sirohaem_synth"/>
</dbReference>
<dbReference type="InterPro" id="IPR028281">
    <property type="entry name" value="Sirohaem_synthase_central"/>
</dbReference>
<dbReference type="InterPro" id="IPR019478">
    <property type="entry name" value="Sirohaem_synthase_dimer_dom"/>
</dbReference>
<dbReference type="InterPro" id="IPR006367">
    <property type="entry name" value="Sirohaem_synthase_N"/>
</dbReference>
<dbReference type="InterPro" id="IPR003043">
    <property type="entry name" value="Uropor_MeTrfase_CS"/>
</dbReference>
<dbReference type="NCBIfam" id="TIGR01469">
    <property type="entry name" value="cobA_cysG_Cterm"/>
    <property type="match status" value="1"/>
</dbReference>
<dbReference type="NCBIfam" id="TIGR01470">
    <property type="entry name" value="cysG_Nterm"/>
    <property type="match status" value="1"/>
</dbReference>
<dbReference type="NCBIfam" id="NF004790">
    <property type="entry name" value="PRK06136.1"/>
    <property type="match status" value="1"/>
</dbReference>
<dbReference type="NCBIfam" id="NF007922">
    <property type="entry name" value="PRK10637.1"/>
    <property type="match status" value="1"/>
</dbReference>
<dbReference type="PANTHER" id="PTHR45790:SF1">
    <property type="entry name" value="SIROHEME SYNTHASE"/>
    <property type="match status" value="1"/>
</dbReference>
<dbReference type="PANTHER" id="PTHR45790">
    <property type="entry name" value="SIROHEME SYNTHASE-RELATED"/>
    <property type="match status" value="1"/>
</dbReference>
<dbReference type="Pfam" id="PF10414">
    <property type="entry name" value="CysG_dimeriser"/>
    <property type="match status" value="1"/>
</dbReference>
<dbReference type="Pfam" id="PF13241">
    <property type="entry name" value="NAD_binding_7"/>
    <property type="match status" value="1"/>
</dbReference>
<dbReference type="Pfam" id="PF14824">
    <property type="entry name" value="Sirohm_synth_M"/>
    <property type="match status" value="1"/>
</dbReference>
<dbReference type="Pfam" id="PF00590">
    <property type="entry name" value="TP_methylase"/>
    <property type="match status" value="1"/>
</dbReference>
<dbReference type="PIRSF" id="PIRSF036426">
    <property type="entry name" value="Sirohaem_synth"/>
    <property type="match status" value="1"/>
</dbReference>
<dbReference type="SUPFAM" id="SSF51735">
    <property type="entry name" value="NAD(P)-binding Rossmann-fold domains"/>
    <property type="match status" value="1"/>
</dbReference>
<dbReference type="SUPFAM" id="SSF75615">
    <property type="entry name" value="Siroheme synthase middle domains-like"/>
    <property type="match status" value="1"/>
</dbReference>
<dbReference type="SUPFAM" id="SSF53790">
    <property type="entry name" value="Tetrapyrrole methylase"/>
    <property type="match status" value="1"/>
</dbReference>
<dbReference type="PROSITE" id="PS00839">
    <property type="entry name" value="SUMT_1"/>
    <property type="match status" value="1"/>
</dbReference>
<dbReference type="PROSITE" id="PS00840">
    <property type="entry name" value="SUMT_2"/>
    <property type="match status" value="1"/>
</dbReference>
<reference key="1">
    <citation type="journal article" date="2008" name="Genomics">
        <title>Characterization of ST-4821 complex, a unique Neisseria meningitidis clone.</title>
        <authorList>
            <person name="Peng J."/>
            <person name="Yang L."/>
            <person name="Yang F."/>
            <person name="Yang J."/>
            <person name="Yan Y."/>
            <person name="Nie H."/>
            <person name="Zhang X."/>
            <person name="Xiong Z."/>
            <person name="Jiang Y."/>
            <person name="Cheng F."/>
            <person name="Xu X."/>
            <person name="Chen S."/>
            <person name="Sun L."/>
            <person name="Li W."/>
            <person name="Shen Y."/>
            <person name="Shao Z."/>
            <person name="Liang X."/>
            <person name="Xu J."/>
            <person name="Jin Q."/>
        </authorList>
    </citation>
    <scope>NUCLEOTIDE SEQUENCE [LARGE SCALE GENOMIC DNA]</scope>
    <source>
        <strain>053442</strain>
    </source>
</reference>
<evidence type="ECO:0000255" key="1">
    <source>
        <dbReference type="HAMAP-Rule" id="MF_01646"/>
    </source>
</evidence>
<feature type="chain" id="PRO_0000330523" description="Siroheme synthase">
    <location>
        <begin position="1"/>
        <end position="480"/>
    </location>
</feature>
<feature type="region of interest" description="Precorrin-2 dehydrogenase /sirohydrochlorin ferrochelatase" evidence="1">
    <location>
        <begin position="1"/>
        <end position="203"/>
    </location>
</feature>
<feature type="region of interest" description="Uroporphyrinogen-III C-methyltransferase" evidence="1">
    <location>
        <begin position="214"/>
        <end position="480"/>
    </location>
</feature>
<feature type="active site" description="Proton acceptor" evidence="1">
    <location>
        <position position="246"/>
    </location>
</feature>
<feature type="active site" description="Proton donor" evidence="1">
    <location>
        <position position="268"/>
    </location>
</feature>
<feature type="binding site" evidence="1">
    <location>
        <begin position="22"/>
        <end position="23"/>
    </location>
    <ligand>
        <name>NAD(+)</name>
        <dbReference type="ChEBI" id="CHEBI:57540"/>
    </ligand>
</feature>
<feature type="binding site" evidence="1">
    <location>
        <begin position="43"/>
        <end position="44"/>
    </location>
    <ligand>
        <name>NAD(+)</name>
        <dbReference type="ChEBI" id="CHEBI:57540"/>
    </ligand>
</feature>
<feature type="binding site" evidence="1">
    <location>
        <position position="223"/>
    </location>
    <ligand>
        <name>S-adenosyl-L-methionine</name>
        <dbReference type="ChEBI" id="CHEBI:59789"/>
    </ligand>
</feature>
<feature type="binding site" evidence="1">
    <location>
        <begin position="299"/>
        <end position="301"/>
    </location>
    <ligand>
        <name>S-adenosyl-L-methionine</name>
        <dbReference type="ChEBI" id="CHEBI:59789"/>
    </ligand>
</feature>
<feature type="binding site" evidence="1">
    <location>
        <position position="304"/>
    </location>
    <ligand>
        <name>S-adenosyl-L-methionine</name>
        <dbReference type="ChEBI" id="CHEBI:59789"/>
    </ligand>
</feature>
<feature type="binding site" evidence="1">
    <location>
        <begin position="329"/>
        <end position="330"/>
    </location>
    <ligand>
        <name>S-adenosyl-L-methionine</name>
        <dbReference type="ChEBI" id="CHEBI:59789"/>
    </ligand>
</feature>
<feature type="binding site" evidence="1">
    <location>
        <position position="381"/>
    </location>
    <ligand>
        <name>S-adenosyl-L-methionine</name>
        <dbReference type="ChEBI" id="CHEBI:59789"/>
    </ligand>
</feature>
<feature type="binding site" evidence="1">
    <location>
        <position position="410"/>
    </location>
    <ligand>
        <name>S-adenosyl-L-methionine</name>
        <dbReference type="ChEBI" id="CHEBI:59789"/>
    </ligand>
</feature>
<feature type="modified residue" description="Phosphoserine" evidence="1">
    <location>
        <position position="128"/>
    </location>
</feature>
<protein>
    <recommendedName>
        <fullName evidence="1">Siroheme synthase</fullName>
    </recommendedName>
    <domain>
        <recommendedName>
            <fullName evidence="1">Uroporphyrinogen-III C-methyltransferase</fullName>
            <shortName evidence="1">Urogen III methylase</shortName>
            <ecNumber evidence="1">2.1.1.107</ecNumber>
        </recommendedName>
        <alternativeName>
            <fullName evidence="1">SUMT</fullName>
        </alternativeName>
        <alternativeName>
            <fullName evidence="1">Uroporphyrinogen III methylase</fullName>
            <shortName evidence="1">UROM</shortName>
        </alternativeName>
    </domain>
    <domain>
        <recommendedName>
            <fullName evidence="1">Precorrin-2 dehydrogenase</fullName>
            <ecNumber evidence="1">1.3.1.76</ecNumber>
        </recommendedName>
    </domain>
    <domain>
        <recommendedName>
            <fullName evidence="1">Sirohydrochlorin ferrochelatase</fullName>
            <ecNumber evidence="1">4.99.1.4</ecNumber>
        </recommendedName>
    </domain>
</protein>
<comment type="function">
    <text evidence="1">Multifunctional enzyme that catalyzes the SAM-dependent methylations of uroporphyrinogen III at position C-2 and C-7 to form precorrin-2 via precorrin-1. Then it catalyzes the NAD-dependent ring dehydrogenation of precorrin-2 to yield sirohydrochlorin. Finally, it catalyzes the ferrochelation of sirohydrochlorin to yield siroheme.</text>
</comment>
<comment type="catalytic activity">
    <reaction evidence="1">
        <text>uroporphyrinogen III + 2 S-adenosyl-L-methionine = precorrin-2 + 2 S-adenosyl-L-homocysteine + H(+)</text>
        <dbReference type="Rhea" id="RHEA:32459"/>
        <dbReference type="ChEBI" id="CHEBI:15378"/>
        <dbReference type="ChEBI" id="CHEBI:57308"/>
        <dbReference type="ChEBI" id="CHEBI:57856"/>
        <dbReference type="ChEBI" id="CHEBI:58827"/>
        <dbReference type="ChEBI" id="CHEBI:59789"/>
        <dbReference type="EC" id="2.1.1.107"/>
    </reaction>
</comment>
<comment type="catalytic activity">
    <reaction evidence="1">
        <text>precorrin-2 + NAD(+) = sirohydrochlorin + NADH + 2 H(+)</text>
        <dbReference type="Rhea" id="RHEA:15613"/>
        <dbReference type="ChEBI" id="CHEBI:15378"/>
        <dbReference type="ChEBI" id="CHEBI:57540"/>
        <dbReference type="ChEBI" id="CHEBI:57945"/>
        <dbReference type="ChEBI" id="CHEBI:58351"/>
        <dbReference type="ChEBI" id="CHEBI:58827"/>
        <dbReference type="EC" id="1.3.1.76"/>
    </reaction>
</comment>
<comment type="catalytic activity">
    <reaction evidence="1">
        <text>siroheme + 2 H(+) = sirohydrochlorin + Fe(2+)</text>
        <dbReference type="Rhea" id="RHEA:24360"/>
        <dbReference type="ChEBI" id="CHEBI:15378"/>
        <dbReference type="ChEBI" id="CHEBI:29033"/>
        <dbReference type="ChEBI" id="CHEBI:58351"/>
        <dbReference type="ChEBI" id="CHEBI:60052"/>
        <dbReference type="EC" id="4.99.1.4"/>
    </reaction>
</comment>
<comment type="pathway">
    <text evidence="1">Cofactor biosynthesis; adenosylcobalamin biosynthesis; precorrin-2 from uroporphyrinogen III: step 1/1.</text>
</comment>
<comment type="pathway">
    <text evidence="1">Cofactor biosynthesis; adenosylcobalamin biosynthesis; sirohydrochlorin from precorrin-2: step 1/1.</text>
</comment>
<comment type="pathway">
    <text evidence="1">Porphyrin-containing compound metabolism; siroheme biosynthesis; precorrin-2 from uroporphyrinogen III: step 1/1.</text>
</comment>
<comment type="pathway">
    <text evidence="1">Porphyrin-containing compound metabolism; siroheme biosynthesis; siroheme from sirohydrochlorin: step 1/1.</text>
</comment>
<comment type="pathway">
    <text evidence="1">Porphyrin-containing compound metabolism; siroheme biosynthesis; sirohydrochlorin from precorrin-2: step 1/1.</text>
</comment>
<comment type="similarity">
    <text evidence="1">In the N-terminal section; belongs to the precorrin-2 dehydrogenase / sirohydrochlorin ferrochelatase family.</text>
</comment>
<comment type="similarity">
    <text evidence="1">In the C-terminal section; belongs to the precorrin methyltransferase family.</text>
</comment>
<keyword id="KW-0169">Cobalamin biosynthesis</keyword>
<keyword id="KW-0456">Lyase</keyword>
<keyword id="KW-0489">Methyltransferase</keyword>
<keyword id="KW-0511">Multifunctional enzyme</keyword>
<keyword id="KW-0520">NAD</keyword>
<keyword id="KW-0560">Oxidoreductase</keyword>
<keyword id="KW-0597">Phosphoprotein</keyword>
<keyword id="KW-0627">Porphyrin biosynthesis</keyword>
<keyword id="KW-0949">S-adenosyl-L-methionine</keyword>
<keyword id="KW-0808">Transferase</keyword>
<organism>
    <name type="scientific">Neisseria meningitidis serogroup C (strain 053442)</name>
    <dbReference type="NCBI Taxonomy" id="374833"/>
    <lineage>
        <taxon>Bacteria</taxon>
        <taxon>Pseudomonadati</taxon>
        <taxon>Pseudomonadota</taxon>
        <taxon>Betaproteobacteria</taxon>
        <taxon>Neisseriales</taxon>
        <taxon>Neisseriaceae</taxon>
        <taxon>Neisseria</taxon>
    </lineage>
</organism>